<comment type="function">
    <text>Rod linker protein, associated with phycoerythrin. Linker polypeptides determine the state of aggregation and the location of the disk-shaped phycobiliprotein units within the phycobilisome and modulate their spectroscopic properties in order to mediate a directed and optimal energy transfer.</text>
</comment>
<comment type="subunit">
    <text>The phycobilisome is a hemidiscoidal structure that is composed of two distinct substructures: a core complex and six rods radiating from the core.</text>
</comment>
<comment type="subcellular location">
    <subcellularLocation>
        <location>Cellular thylakoid membrane</location>
        <topology>Peripheral membrane protein</topology>
        <orientation>Cytoplasmic side</orientation>
    </subcellularLocation>
    <text>Associated with phycoerythrin.</text>
</comment>
<comment type="induction">
    <text>By green light.</text>
</comment>
<comment type="similarity">
    <text evidence="2">Belongs to the phycobilisome linker protein family.</text>
</comment>
<gene>
    <name type="primary">cpeD</name>
</gene>
<sequence length="249" mass="27891">MASQTILELWPSSSLEEVQTIIRAVYKQVLGNPHVMESERLVTAESQLCDRSITVREFVRSVAKSDFYRNRYFQSCAPYRFVELNFLHLLGRAPQDQREVSEHIVRTVAEGYDAEIDSYIDSSEYEAAFGENVVPYYRGRSSEANSKQVGFNRIFALDRGPAQIDSAVKSAQLVYAVATNSANAIKASSSTVIGSGTEKRFKILVQGSKFDSPRRISTTEYIVPASKMTPQIQRINRTSGKIVSITEIV</sequence>
<dbReference type="EMBL" id="M33832">
    <property type="protein sequence ID" value="AAA24883.1"/>
    <property type="molecule type" value="Genomic_DNA"/>
</dbReference>
<dbReference type="PIR" id="S32609">
    <property type="entry name" value="S32609"/>
</dbReference>
<dbReference type="SMR" id="P18543"/>
<dbReference type="GO" id="GO:0030089">
    <property type="term" value="C:phycobilisome"/>
    <property type="evidence" value="ECO:0007669"/>
    <property type="project" value="UniProtKB-KW"/>
</dbReference>
<dbReference type="GO" id="GO:0031676">
    <property type="term" value="C:plasma membrane-derived thylakoid membrane"/>
    <property type="evidence" value="ECO:0007669"/>
    <property type="project" value="UniProtKB-SubCell"/>
</dbReference>
<dbReference type="GO" id="GO:0015979">
    <property type="term" value="P:photosynthesis"/>
    <property type="evidence" value="ECO:0007669"/>
    <property type="project" value="UniProtKB-KW"/>
</dbReference>
<dbReference type="Gene3D" id="1.10.3130.20">
    <property type="entry name" value="Phycobilisome linker domain"/>
    <property type="match status" value="1"/>
</dbReference>
<dbReference type="InterPro" id="IPR008213">
    <property type="entry name" value="CpcD-like_dom"/>
</dbReference>
<dbReference type="InterPro" id="IPR001297">
    <property type="entry name" value="PBS_linker_dom"/>
</dbReference>
<dbReference type="InterPro" id="IPR038255">
    <property type="entry name" value="PBS_linker_sf"/>
</dbReference>
<dbReference type="InterPro" id="IPR016470">
    <property type="entry name" value="Phycobilisome"/>
</dbReference>
<dbReference type="PANTHER" id="PTHR34011:SF6">
    <property type="entry name" value="PHYCOBILIPROTEIN APCE"/>
    <property type="match status" value="1"/>
</dbReference>
<dbReference type="PANTHER" id="PTHR34011">
    <property type="entry name" value="PHYCOBILISOME 32.1 KDA LINKER POLYPEPTIDE, PHYCOCYANIN-ASSOCIATED, ROD 2-RELATED"/>
    <property type="match status" value="1"/>
</dbReference>
<dbReference type="Pfam" id="PF01383">
    <property type="entry name" value="CpcD"/>
    <property type="match status" value="1"/>
</dbReference>
<dbReference type="Pfam" id="PF00427">
    <property type="entry name" value="PBS_linker_poly"/>
    <property type="match status" value="1"/>
</dbReference>
<dbReference type="PIRSF" id="PIRSF005898">
    <property type="entry name" value="Phycobilisome_CpeC/CpcI"/>
    <property type="match status" value="1"/>
</dbReference>
<dbReference type="SMART" id="SM01094">
    <property type="entry name" value="CpcD"/>
    <property type="match status" value="1"/>
</dbReference>
<dbReference type="PROSITE" id="PS51441">
    <property type="entry name" value="CPCD_LIKE"/>
    <property type="match status" value="1"/>
</dbReference>
<dbReference type="PROSITE" id="PS51445">
    <property type="entry name" value="PBS_LINKER"/>
    <property type="match status" value="1"/>
</dbReference>
<protein>
    <recommendedName>
        <fullName>Phycobilisome 27.9 kDa linker polypeptide, phycoerythrin-associated, rod</fullName>
    </recommendedName>
</protein>
<feature type="initiator methionine" description="Removed" evidence="3">
    <location>
        <position position="1"/>
    </location>
</feature>
<feature type="chain" id="PRO_0000199213" description="Phycobilisome 27.9 kDa linker polypeptide, phycoerythrin-associated, rod">
    <location>
        <begin position="2"/>
        <end position="249"/>
    </location>
</feature>
<feature type="domain" description="PBS-linker" evidence="2">
    <location>
        <begin position="2"/>
        <end position="166"/>
    </location>
</feature>
<feature type="domain" description="CpcD-like" evidence="1">
    <location>
        <begin position="198"/>
        <end position="248"/>
    </location>
</feature>
<name>PYR2_MICDP</name>
<accession>P18543</accession>
<proteinExistence type="evidence at protein level"/>
<evidence type="ECO:0000255" key="1">
    <source>
        <dbReference type="PROSITE-ProRule" id="PRU00771"/>
    </source>
</evidence>
<evidence type="ECO:0000255" key="2">
    <source>
        <dbReference type="PROSITE-ProRule" id="PRU00775"/>
    </source>
</evidence>
<evidence type="ECO:0000269" key="3">
    <source>
    </source>
</evidence>
<keyword id="KW-0042">Antenna complex</keyword>
<keyword id="KW-0903">Direct protein sequencing</keyword>
<keyword id="KW-0472">Membrane</keyword>
<keyword id="KW-0602">Photosynthesis</keyword>
<keyword id="KW-0605">Phycobilisome</keyword>
<keyword id="KW-0793">Thylakoid</keyword>
<reference key="1">
    <citation type="journal article" date="1990" name="J. Bacteriol.">
        <title>Characterization of the light-regulated operon encoding the phycoerythrin-associated linker proteins from the cyanobacterium Fremyella diplosiphon.</title>
        <authorList>
            <person name="Federspiel N.A."/>
            <person name="Grossman A.R."/>
        </authorList>
    </citation>
    <scope>NUCLEOTIDE SEQUENCE [GENOMIC DNA]</scope>
</reference>
<reference key="2">
    <citation type="journal article" date="1992" name="FEBS Lett.">
        <title>Three C-phycoerythrin-associated linker polypeptides in the phycobilisome of green-light-grown Calothrix sp. PCC 7601 (cyanobacteria).</title>
        <authorList>
            <person name="Glauser M."/>
            <person name="Sidler W.A."/>
            <person name="Graham K.W."/>
            <person name="Bryant D.A."/>
            <person name="Frank G."/>
            <person name="Wehrli E."/>
            <person name="Zuber H."/>
        </authorList>
    </citation>
    <scope>PROTEIN SEQUENCE OF 2-32</scope>
</reference>
<organism>
    <name type="scientific">Microchaete diplosiphon</name>
    <name type="common">Fremyella diplosiphon</name>
    <dbReference type="NCBI Taxonomy" id="1197"/>
    <lineage>
        <taxon>Bacteria</taxon>
        <taxon>Bacillati</taxon>
        <taxon>Cyanobacteriota</taxon>
        <taxon>Cyanophyceae</taxon>
        <taxon>Nostocales</taxon>
        <taxon>Rivulariaceae</taxon>
        <taxon>Microchaete</taxon>
    </lineage>
</organism>